<sequence length="789" mass="89553">MPLCEKGNDPIDSSTIDSLCAAFDKTLKSTPDVQKYNDAINTIFQLRQKSESGKMPADLTNSEALKDRQKIEEILTRSYQDHSESRVHLSKLIQNDIPFALNLFEILSRSSIHVFVGCFSNKDATIALLNELQIRIHYGEDTHVTYLLSIILQLLNKFKYNFKEVRFLVKELILRISEDEVKSMMLIIFAELQSSFQKDFDKAVVDFMSSLIVEAEIDVGNDPLSIIVKTLSELYPSLTTLCSEIFLTKGLSKLFKKRVFEEQDLQFTKELLRLLSSACIDETMRTYITENYLQLLERSLNVEDVQIYSALVLVKTWSFTKLTCINLKQLSEIFINAISRRIMPKIENVNESAVKLEEVPKVEMSVEALAYLSLKASVKIMIRSNESFTEILLTMIKSQKMTHCLYGLLVIMANLSTLPEESNGSSQSINDLKNYADLKGPGADKVGAEKESKEDILLFNEKYILRTELISFLKREMHNLSPNCKQQVVRVIYNITRSKNFIPQCISQGGTTIILEYLANKQDIGEPIRILGCRALTRMLIFTNPGLIFKKYSALNAIPFLFELLPRSTPVDDNPLHNDEQIKLTDNYEALLALTNLASSETSDGEEVCKHIVSTKVYWSTIENLMLDENVPLQRSTLELISNMMSHPLTIAAKFFNLENPQSLRNFNILVKLLQLSDVESQRAVAAIFANIATTIPLIAKELLTKKELIENAIQVFADQIDDIELRQRLLMLFFGLFEVIPDNGTNEVYPLLQENQKLKDALNMSLKRGDSGPEFSAAIPVILAKIKV</sequence>
<gene>
    <name type="primary">SHE4</name>
    <name type="ordered locus">YOR035C</name>
    <name type="ORF">OR26.26</name>
</gene>
<organism>
    <name type="scientific">Saccharomyces cerevisiae (strain ATCC 204508 / S288c)</name>
    <name type="common">Baker's yeast</name>
    <dbReference type="NCBI Taxonomy" id="559292"/>
    <lineage>
        <taxon>Eukaryota</taxon>
        <taxon>Fungi</taxon>
        <taxon>Dikarya</taxon>
        <taxon>Ascomycota</taxon>
        <taxon>Saccharomycotina</taxon>
        <taxon>Saccharomycetes</taxon>
        <taxon>Saccharomycetales</taxon>
        <taxon>Saccharomycetaceae</taxon>
        <taxon>Saccharomyces</taxon>
    </lineage>
</organism>
<feature type="chain" id="PRO_0000097736" description="SWI5-dependent HO expression protein 4">
    <location>
        <begin position="1"/>
        <end position="789"/>
    </location>
</feature>
<feature type="modified residue" description="Phosphoserine" evidence="3">
    <location>
        <position position="18"/>
    </location>
</feature>
<feature type="sequence conflict" description="In Ref. 1." evidence="2" ref="1">
    <original>L</original>
    <variation>LKL</variation>
    <location>
        <position position="254"/>
    </location>
</feature>
<feature type="sequence conflict" description="In Ref. 1; CAA63795." evidence="2" ref="1">
    <original>D</original>
    <variation>G</variation>
    <location>
        <position position="628"/>
    </location>
</feature>
<feature type="sequence conflict" description="In Ref. 1; CAA63795." evidence="2" ref="1">
    <original>G</original>
    <variation>D</variation>
    <location>
        <position position="770"/>
    </location>
</feature>
<feature type="strand" evidence="4">
    <location>
        <begin position="4"/>
        <end position="9"/>
    </location>
</feature>
<feature type="helix" evidence="4">
    <location>
        <begin position="14"/>
        <end position="25"/>
    </location>
</feature>
<feature type="turn" evidence="4">
    <location>
        <begin position="26"/>
        <end position="28"/>
    </location>
</feature>
<feature type="helix" evidence="4">
    <location>
        <begin position="33"/>
        <end position="43"/>
    </location>
</feature>
<feature type="turn" evidence="4">
    <location>
        <begin position="44"/>
        <end position="47"/>
    </location>
</feature>
<feature type="helix" evidence="4">
    <location>
        <begin position="51"/>
        <end position="53"/>
    </location>
</feature>
<feature type="turn" evidence="4">
    <location>
        <begin position="57"/>
        <end position="59"/>
    </location>
</feature>
<feature type="strand" evidence="4">
    <location>
        <begin position="60"/>
        <end position="62"/>
    </location>
</feature>
<feature type="helix" evidence="4">
    <location>
        <begin position="65"/>
        <end position="80"/>
    </location>
</feature>
<feature type="helix" evidence="4">
    <location>
        <begin position="83"/>
        <end position="95"/>
    </location>
</feature>
<feature type="helix" evidence="4">
    <location>
        <begin position="97"/>
        <end position="105"/>
    </location>
</feature>
<feature type="helix" evidence="4">
    <location>
        <begin position="109"/>
        <end position="111"/>
    </location>
</feature>
<feature type="helix" evidence="4">
    <location>
        <begin position="112"/>
        <end position="116"/>
    </location>
</feature>
<feature type="helix" evidence="4">
    <location>
        <begin position="122"/>
        <end position="125"/>
    </location>
</feature>
<feature type="helix" evidence="4">
    <location>
        <begin position="126"/>
        <end position="138"/>
    </location>
</feature>
<feature type="helix" evidence="4">
    <location>
        <begin position="144"/>
        <end position="157"/>
    </location>
</feature>
<feature type="turn" evidence="4">
    <location>
        <begin position="163"/>
        <end position="166"/>
    </location>
</feature>
<feature type="helix" evidence="4">
    <location>
        <begin position="167"/>
        <end position="173"/>
    </location>
</feature>
<feature type="turn" evidence="4">
    <location>
        <begin position="174"/>
        <end position="177"/>
    </location>
</feature>
<feature type="helix" evidence="4">
    <location>
        <begin position="179"/>
        <end position="217"/>
    </location>
</feature>
<feature type="helix" evidence="4">
    <location>
        <begin position="223"/>
        <end position="234"/>
    </location>
</feature>
<feature type="turn" evidence="4">
    <location>
        <begin position="235"/>
        <end position="238"/>
    </location>
</feature>
<feature type="helix" evidence="4">
    <location>
        <begin position="239"/>
        <end position="246"/>
    </location>
</feature>
<feature type="turn" evidence="4">
    <location>
        <begin position="248"/>
        <end position="250"/>
    </location>
</feature>
<feature type="helix" evidence="4">
    <location>
        <begin position="251"/>
        <end position="260"/>
    </location>
</feature>
<feature type="helix" evidence="4">
    <location>
        <begin position="265"/>
        <end position="278"/>
    </location>
</feature>
<feature type="helix" evidence="4">
    <location>
        <begin position="282"/>
        <end position="299"/>
    </location>
</feature>
<feature type="helix" evidence="4">
    <location>
        <begin position="303"/>
        <end position="305"/>
    </location>
</feature>
<feature type="helix" evidence="4">
    <location>
        <begin position="306"/>
        <end position="316"/>
    </location>
</feature>
<feature type="helix" evidence="4">
    <location>
        <begin position="318"/>
        <end position="320"/>
    </location>
</feature>
<feature type="helix" evidence="4">
    <location>
        <begin position="327"/>
        <end position="337"/>
    </location>
</feature>
<feature type="turn" evidence="4">
    <location>
        <begin position="338"/>
        <end position="340"/>
    </location>
</feature>
<feature type="helix" evidence="4">
    <location>
        <begin position="359"/>
        <end position="372"/>
    </location>
</feature>
<feature type="helix" evidence="4">
    <location>
        <begin position="377"/>
        <end position="384"/>
    </location>
</feature>
<feature type="helix" evidence="4">
    <location>
        <begin position="386"/>
        <end position="396"/>
    </location>
</feature>
<feature type="turn" evidence="4">
    <location>
        <begin position="397"/>
        <end position="399"/>
    </location>
</feature>
<feature type="helix" evidence="4">
    <location>
        <begin position="404"/>
        <end position="414"/>
    </location>
</feature>
<feature type="helix" evidence="4">
    <location>
        <begin position="449"/>
        <end position="463"/>
    </location>
</feature>
<feature type="turn" evidence="4">
    <location>
        <begin position="464"/>
        <end position="468"/>
    </location>
</feature>
<feature type="helix" evidence="4">
    <location>
        <begin position="469"/>
        <end position="476"/>
    </location>
</feature>
<feature type="helix" evidence="4">
    <location>
        <begin position="477"/>
        <end position="479"/>
    </location>
</feature>
<feature type="helix" evidence="4">
    <location>
        <begin position="482"/>
        <end position="496"/>
    </location>
</feature>
<feature type="helix" evidence="4">
    <location>
        <begin position="499"/>
        <end position="501"/>
    </location>
</feature>
<feature type="helix" evidence="4">
    <location>
        <begin position="502"/>
        <end position="507"/>
    </location>
</feature>
<feature type="helix" evidence="4">
    <location>
        <begin position="510"/>
        <end position="517"/>
    </location>
</feature>
<feature type="helix" evidence="4">
    <location>
        <begin position="527"/>
        <end position="541"/>
    </location>
</feature>
<feature type="helix" evidence="4">
    <location>
        <begin position="545"/>
        <end position="548"/>
    </location>
</feature>
<feature type="strand" evidence="4">
    <location>
        <begin position="549"/>
        <end position="552"/>
    </location>
</feature>
<feature type="helix" evidence="4">
    <location>
        <begin position="557"/>
        <end position="563"/>
    </location>
</feature>
<feature type="strand" evidence="4">
    <location>
        <begin position="568"/>
        <end position="570"/>
    </location>
</feature>
<feature type="helix" evidence="4">
    <location>
        <begin position="584"/>
        <end position="599"/>
    </location>
</feature>
<feature type="helix" evidence="4">
    <location>
        <begin position="603"/>
        <end position="614"/>
    </location>
</feature>
<feature type="helix" evidence="4">
    <location>
        <begin position="616"/>
        <end position="624"/>
    </location>
</feature>
<feature type="helix" evidence="4">
    <location>
        <begin position="625"/>
        <end position="627"/>
    </location>
</feature>
<feature type="helix" evidence="4">
    <location>
        <begin position="631"/>
        <end position="645"/>
    </location>
</feature>
<feature type="helix" evidence="4">
    <location>
        <begin position="648"/>
        <end position="650"/>
    </location>
</feature>
<feature type="helix" evidence="4">
    <location>
        <begin position="652"/>
        <end position="654"/>
    </location>
</feature>
<feature type="helix" evidence="4">
    <location>
        <begin position="661"/>
        <end position="672"/>
    </location>
</feature>
<feature type="helix" evidence="4">
    <location>
        <begin position="673"/>
        <end position="675"/>
    </location>
</feature>
<feature type="helix" evidence="4">
    <location>
        <begin position="679"/>
        <end position="695"/>
    </location>
</feature>
<feature type="helix" evidence="4">
    <location>
        <begin position="697"/>
        <end position="703"/>
    </location>
</feature>
<feature type="helix" evidence="4">
    <location>
        <begin position="707"/>
        <end position="719"/>
    </location>
</feature>
<feature type="turn" evidence="4">
    <location>
        <begin position="720"/>
        <end position="722"/>
    </location>
</feature>
<feature type="helix" evidence="4">
    <location>
        <begin position="724"/>
        <end position="738"/>
    </location>
</feature>
<feature type="turn" evidence="4">
    <location>
        <begin position="744"/>
        <end position="747"/>
    </location>
</feature>
<feature type="helix" evidence="4">
    <location>
        <begin position="751"/>
        <end position="754"/>
    </location>
</feature>
<feature type="helix" evidence="4">
    <location>
        <begin position="757"/>
        <end position="767"/>
    </location>
</feature>
<feature type="strand" evidence="4">
    <location>
        <begin position="768"/>
        <end position="772"/>
    </location>
</feature>
<feature type="helix" evidence="4">
    <location>
        <begin position="779"/>
        <end position="784"/>
    </location>
</feature>
<name>SHE4_YEAST</name>
<keyword id="KW-0002">3D-structure</keyword>
<keyword id="KW-0963">Cytoplasm</keyword>
<keyword id="KW-0597">Phosphoprotein</keyword>
<keyword id="KW-1185">Reference proteome</keyword>
<protein>
    <recommendedName>
        <fullName>SWI5-dependent HO expression protein 4</fullName>
    </recommendedName>
</protein>
<accession>P51534</accession>
<accession>D6W2A2</accession>
<proteinExistence type="evidence at protein level"/>
<reference key="1">
    <citation type="journal article" date="1996" name="Cell">
        <title>Mother cell-specific HO expression in budding yeast depends on the unconventional myosin myo4p and other cytoplasmic proteins.</title>
        <authorList>
            <person name="Jansen R.P."/>
            <person name="Dowzer C."/>
            <person name="Michaelis C."/>
            <person name="Galova M."/>
            <person name="Nasmyth K."/>
        </authorList>
    </citation>
    <scope>NUCLEOTIDE SEQUENCE [GENOMIC DNA]</scope>
    <source>
        <strain>ATCC 200060 / W303</strain>
    </source>
</reference>
<reference key="2">
    <citation type="journal article" date="1997" name="Nature">
        <title>The nucleotide sequence of Saccharomyces cerevisiae chromosome XV.</title>
        <authorList>
            <person name="Dujon B."/>
            <person name="Albermann K."/>
            <person name="Aldea M."/>
            <person name="Alexandraki D."/>
            <person name="Ansorge W."/>
            <person name="Arino J."/>
            <person name="Benes V."/>
            <person name="Bohn C."/>
            <person name="Bolotin-Fukuhara M."/>
            <person name="Bordonne R."/>
            <person name="Boyer J."/>
            <person name="Camasses A."/>
            <person name="Casamayor A."/>
            <person name="Casas C."/>
            <person name="Cheret G."/>
            <person name="Cziepluch C."/>
            <person name="Daignan-Fornier B."/>
            <person name="Dang V.-D."/>
            <person name="de Haan M."/>
            <person name="Delius H."/>
            <person name="Durand P."/>
            <person name="Fairhead C."/>
            <person name="Feldmann H."/>
            <person name="Gaillon L."/>
            <person name="Galisson F."/>
            <person name="Gamo F.-J."/>
            <person name="Gancedo C."/>
            <person name="Goffeau A."/>
            <person name="Goulding S.E."/>
            <person name="Grivell L.A."/>
            <person name="Habbig B."/>
            <person name="Hand N.J."/>
            <person name="Hani J."/>
            <person name="Hattenhorst U."/>
            <person name="Hebling U."/>
            <person name="Hernando Y."/>
            <person name="Herrero E."/>
            <person name="Heumann K."/>
            <person name="Hiesel R."/>
            <person name="Hilger F."/>
            <person name="Hofmann B."/>
            <person name="Hollenberg C.P."/>
            <person name="Hughes B."/>
            <person name="Jauniaux J.-C."/>
            <person name="Kalogeropoulos A."/>
            <person name="Katsoulou C."/>
            <person name="Kordes E."/>
            <person name="Lafuente M.J."/>
            <person name="Landt O."/>
            <person name="Louis E.J."/>
            <person name="Maarse A.C."/>
            <person name="Madania A."/>
            <person name="Mannhaupt G."/>
            <person name="Marck C."/>
            <person name="Martin R.P."/>
            <person name="Mewes H.-W."/>
            <person name="Michaux G."/>
            <person name="Paces V."/>
            <person name="Parle-McDermott A.G."/>
            <person name="Pearson B.M."/>
            <person name="Perrin A."/>
            <person name="Pettersson B."/>
            <person name="Poch O."/>
            <person name="Pohl T.M."/>
            <person name="Poirey R."/>
            <person name="Portetelle D."/>
            <person name="Pujol A."/>
            <person name="Purnelle B."/>
            <person name="Ramezani Rad M."/>
            <person name="Rechmann S."/>
            <person name="Schwager C."/>
            <person name="Schweizer M."/>
            <person name="Sor F."/>
            <person name="Sterky F."/>
            <person name="Tarassov I.A."/>
            <person name="Teodoru C."/>
            <person name="Tettelin H."/>
            <person name="Thierry A."/>
            <person name="Tobiasch E."/>
            <person name="Tzermia M."/>
            <person name="Uhlen M."/>
            <person name="Unseld M."/>
            <person name="Valens M."/>
            <person name="Vandenbol M."/>
            <person name="Vetter I."/>
            <person name="Vlcek C."/>
            <person name="Voet M."/>
            <person name="Volckaert G."/>
            <person name="Voss H."/>
            <person name="Wambutt R."/>
            <person name="Wedler H."/>
            <person name="Wiemann S."/>
            <person name="Winsor B."/>
            <person name="Wolfe K.H."/>
            <person name="Zollner A."/>
            <person name="Zumstein E."/>
            <person name="Kleine K."/>
        </authorList>
    </citation>
    <scope>NUCLEOTIDE SEQUENCE [LARGE SCALE GENOMIC DNA]</scope>
    <source>
        <strain>ATCC 204508 / S288c</strain>
    </source>
</reference>
<reference key="3">
    <citation type="journal article" date="2014" name="G3 (Bethesda)">
        <title>The reference genome sequence of Saccharomyces cerevisiae: Then and now.</title>
        <authorList>
            <person name="Engel S.R."/>
            <person name="Dietrich F.S."/>
            <person name="Fisk D.G."/>
            <person name="Binkley G."/>
            <person name="Balakrishnan R."/>
            <person name="Costanzo M.C."/>
            <person name="Dwight S.S."/>
            <person name="Hitz B.C."/>
            <person name="Karra K."/>
            <person name="Nash R.S."/>
            <person name="Weng S."/>
            <person name="Wong E.D."/>
            <person name="Lloyd P."/>
            <person name="Skrzypek M.S."/>
            <person name="Miyasato S.R."/>
            <person name="Simison M."/>
            <person name="Cherry J.M."/>
        </authorList>
    </citation>
    <scope>GENOME REANNOTATION</scope>
    <source>
        <strain>ATCC 204508 / S288c</strain>
    </source>
</reference>
<reference key="4">
    <citation type="journal article" date="2003" name="Nature">
        <title>Global analysis of protein expression in yeast.</title>
        <authorList>
            <person name="Ghaemmaghami S."/>
            <person name="Huh W.-K."/>
            <person name="Bower K."/>
            <person name="Howson R.W."/>
            <person name="Belle A."/>
            <person name="Dephoure N."/>
            <person name="O'Shea E.K."/>
            <person name="Weissman J.S."/>
        </authorList>
    </citation>
    <scope>LEVEL OF PROTEIN EXPRESSION [LARGE SCALE ANALYSIS]</scope>
</reference>
<reference key="5">
    <citation type="journal article" date="2008" name="Mol. Cell. Proteomics">
        <title>A multidimensional chromatography technology for in-depth phosphoproteome analysis.</title>
        <authorList>
            <person name="Albuquerque C.P."/>
            <person name="Smolka M.B."/>
            <person name="Payne S.H."/>
            <person name="Bafna V."/>
            <person name="Eng J."/>
            <person name="Zhou H."/>
        </authorList>
    </citation>
    <scope>PHOSPHORYLATION [LARGE SCALE ANALYSIS] AT SER-18</scope>
    <scope>IDENTIFICATION BY MASS SPECTROMETRY [LARGE SCALE ANALYSIS]</scope>
</reference>
<comment type="function">
    <text>Required for mother cell-specific ho expression. Might be required for the transport of factors (such as ASH1) that promote HO repression from the mother cell into its bud.</text>
</comment>
<comment type="interaction">
    <interactant intactId="EBI-17086">
        <id>P51534</id>
    </interactant>
    <interactant intactId="EBI-11659">
        <id>P19524</id>
        <label>MYO2</label>
    </interactant>
    <organismsDiffer>false</organismsDiffer>
    <experiments>3</experiments>
</comment>
<comment type="interaction">
    <interactant intactId="EBI-17086">
        <id>P51534</id>
    </interactant>
    <interactant intactId="EBI-11681">
        <id>P32492</id>
        <label>MYO4</label>
    </interactant>
    <organismsDiffer>false</organismsDiffer>
    <experiments>4</experiments>
</comment>
<comment type="interaction">
    <interactant intactId="EBI-17086">
        <id>P51534</id>
    </interactant>
    <interactant intactId="EBI-17086">
        <id>P51534</id>
        <label>SHE4</label>
    </interactant>
    <organismsDiffer>false</organismsDiffer>
    <experiments>3</experiments>
</comment>
<comment type="subcellular location">
    <subcellularLocation>
        <location evidence="2">Cytoplasm</location>
    </subcellularLocation>
</comment>
<comment type="miscellaneous">
    <text evidence="1">Present with 3410 molecules/cell in log phase SD medium.</text>
</comment>
<evidence type="ECO:0000269" key="1">
    <source>
    </source>
</evidence>
<evidence type="ECO:0000305" key="2"/>
<evidence type="ECO:0007744" key="3">
    <source>
    </source>
</evidence>
<evidence type="ECO:0007829" key="4">
    <source>
        <dbReference type="PDB" id="3OPB"/>
    </source>
</evidence>
<dbReference type="EMBL" id="X93598">
    <property type="protein sequence ID" value="CAA63795.1"/>
    <property type="molecule type" value="Genomic_DNA"/>
</dbReference>
<dbReference type="EMBL" id="X87331">
    <property type="protein sequence ID" value="CAA60752.1"/>
    <property type="molecule type" value="Genomic_DNA"/>
</dbReference>
<dbReference type="EMBL" id="Z74943">
    <property type="protein sequence ID" value="CAA99225.1"/>
    <property type="molecule type" value="Genomic_DNA"/>
</dbReference>
<dbReference type="EMBL" id="BK006948">
    <property type="protein sequence ID" value="DAA10818.1"/>
    <property type="molecule type" value="Genomic_DNA"/>
</dbReference>
<dbReference type="PIR" id="S62172">
    <property type="entry name" value="S62172"/>
</dbReference>
<dbReference type="RefSeq" id="NP_014678.1">
    <property type="nucleotide sequence ID" value="NM_001183454.1"/>
</dbReference>
<dbReference type="PDB" id="3OPB">
    <property type="method" value="X-ray"/>
    <property type="resolution" value="2.90 A"/>
    <property type="chains" value="A/B=1-789"/>
</dbReference>
<dbReference type="PDBsum" id="3OPB"/>
<dbReference type="SMR" id="P51534"/>
<dbReference type="BioGRID" id="34437">
    <property type="interactions" value="334"/>
</dbReference>
<dbReference type="DIP" id="DIP-4186N"/>
<dbReference type="FunCoup" id="P51534">
    <property type="interactions" value="147"/>
</dbReference>
<dbReference type="IntAct" id="P51534">
    <property type="interactions" value="7"/>
</dbReference>
<dbReference type="MINT" id="P51534"/>
<dbReference type="STRING" id="4932.YOR035C"/>
<dbReference type="iPTMnet" id="P51534"/>
<dbReference type="PaxDb" id="4932-YOR035C"/>
<dbReference type="PeptideAtlas" id="P51534"/>
<dbReference type="EnsemblFungi" id="YOR035C_mRNA">
    <property type="protein sequence ID" value="YOR035C"/>
    <property type="gene ID" value="YOR035C"/>
</dbReference>
<dbReference type="GeneID" id="854200"/>
<dbReference type="KEGG" id="sce:YOR035C"/>
<dbReference type="AGR" id="SGD:S000005561"/>
<dbReference type="SGD" id="S000005561">
    <property type="gene designation" value="SHE4"/>
</dbReference>
<dbReference type="VEuPathDB" id="FungiDB:YOR035C"/>
<dbReference type="eggNOG" id="KOG4151">
    <property type="taxonomic scope" value="Eukaryota"/>
</dbReference>
<dbReference type="HOGENOM" id="CLU_364165_0_0_1"/>
<dbReference type="InParanoid" id="P51534"/>
<dbReference type="OMA" id="CIDENVR"/>
<dbReference type="OrthoDB" id="5574718at2759"/>
<dbReference type="BioCyc" id="YEAST:G3O-33581-MONOMER"/>
<dbReference type="BioGRID-ORCS" id="854200">
    <property type="hits" value="0 hits in 10 CRISPR screens"/>
</dbReference>
<dbReference type="EvolutionaryTrace" id="P51534"/>
<dbReference type="PRO" id="PR:P51534"/>
<dbReference type="Proteomes" id="UP000002311">
    <property type="component" value="Chromosome XV"/>
</dbReference>
<dbReference type="RNAct" id="P51534">
    <property type="molecule type" value="protein"/>
</dbReference>
<dbReference type="GO" id="GO:0005737">
    <property type="term" value="C:cytoplasm"/>
    <property type="evidence" value="ECO:0000314"/>
    <property type="project" value="SGD"/>
</dbReference>
<dbReference type="GO" id="GO:0051879">
    <property type="term" value="F:Hsp90 protein binding"/>
    <property type="evidence" value="ECO:0000318"/>
    <property type="project" value="GO_Central"/>
</dbReference>
<dbReference type="GO" id="GO:0042802">
    <property type="term" value="F:identical protein binding"/>
    <property type="evidence" value="ECO:0000353"/>
    <property type="project" value="IntAct"/>
</dbReference>
<dbReference type="GO" id="GO:0017022">
    <property type="term" value="F:myosin binding"/>
    <property type="evidence" value="ECO:0000314"/>
    <property type="project" value="SGD"/>
</dbReference>
<dbReference type="GO" id="GO:0030036">
    <property type="term" value="P:actin cytoskeleton organization"/>
    <property type="evidence" value="ECO:0000304"/>
    <property type="project" value="SGD"/>
</dbReference>
<dbReference type="GO" id="GO:0061077">
    <property type="term" value="P:chaperone-mediated protein folding"/>
    <property type="evidence" value="ECO:0000318"/>
    <property type="project" value="GO_Central"/>
</dbReference>
<dbReference type="GO" id="GO:0008298">
    <property type="term" value="P:intracellular mRNA localization"/>
    <property type="evidence" value="ECO:0000315"/>
    <property type="project" value="SGD"/>
</dbReference>
<dbReference type="GO" id="GO:0007533">
    <property type="term" value="P:mating type switching"/>
    <property type="evidence" value="ECO:0000315"/>
    <property type="project" value="SGD"/>
</dbReference>
<dbReference type="Gene3D" id="1.25.10.100">
    <property type="match status" value="1"/>
</dbReference>
<dbReference type="Gene3D" id="1.25.10.10">
    <property type="entry name" value="Leucine-rich Repeat Variant"/>
    <property type="match status" value="1"/>
</dbReference>
<dbReference type="InterPro" id="IPR011989">
    <property type="entry name" value="ARM-like"/>
</dbReference>
<dbReference type="InterPro" id="IPR016024">
    <property type="entry name" value="ARM-type_fold"/>
</dbReference>
<dbReference type="InterPro" id="IPR024660">
    <property type="entry name" value="UCS_central_dom"/>
</dbReference>
<dbReference type="PANTHER" id="PTHR45994">
    <property type="entry name" value="FI21225P1"/>
    <property type="match status" value="1"/>
</dbReference>
<dbReference type="PANTHER" id="PTHR45994:SF1">
    <property type="entry name" value="FI21225P1"/>
    <property type="match status" value="1"/>
</dbReference>
<dbReference type="Pfam" id="PF11701">
    <property type="entry name" value="UNC45-central"/>
    <property type="match status" value="1"/>
</dbReference>
<dbReference type="SUPFAM" id="SSF48371">
    <property type="entry name" value="ARM repeat"/>
    <property type="match status" value="1"/>
</dbReference>